<sequence>MRGRVKNYILEKIREHGAIHMTLIDPEKTTPEVAARIAREVAEAGTSAIMVGGSIGVSEAMTDEVVLAIKRSTEVPVILFPGSPTALSRHADAVWFLSVLNSQNPYFITGAQMQGAPIVKRYGLEVLPLGYIIVGEGGAVSIVSYTRPLPFAKPEVVAAYALAAEYMGFQFVYLEGGSGGEPVPPKIVKMVKGVTTLPLIVGGGIRSPEVAKELAKAGADIIVTGTIVEESENIRETIGRIVRATREGALERSRE</sequence>
<keyword id="KW-0963">Cytoplasm</keyword>
<keyword id="KW-0444">Lipid biosynthesis</keyword>
<keyword id="KW-0443">Lipid metabolism</keyword>
<keyword id="KW-0460">Magnesium</keyword>
<keyword id="KW-0479">Metal-binding</keyword>
<keyword id="KW-0594">Phospholipid biosynthesis</keyword>
<keyword id="KW-1208">Phospholipid metabolism</keyword>
<keyword id="KW-1185">Reference proteome</keyword>
<keyword id="KW-0808">Transferase</keyword>
<evidence type="ECO:0000255" key="1">
    <source>
        <dbReference type="HAMAP-Rule" id="MF_00112"/>
    </source>
</evidence>
<feature type="chain" id="PRO_0000350688" description="Geranylgeranylglyceryl phosphate synthase">
    <location>
        <begin position="1"/>
        <end position="255"/>
    </location>
</feature>
<feature type="binding site" evidence="1">
    <location>
        <position position="25"/>
    </location>
    <ligand>
        <name>Mg(2+)</name>
        <dbReference type="ChEBI" id="CHEBI:18420"/>
    </ligand>
</feature>
<feature type="binding site" evidence="1">
    <location>
        <position position="54"/>
    </location>
    <ligand>
        <name>Mg(2+)</name>
        <dbReference type="ChEBI" id="CHEBI:18420"/>
    </ligand>
</feature>
<feature type="binding site" evidence="1">
    <location>
        <begin position="173"/>
        <end position="179"/>
    </location>
    <ligand>
        <name>sn-glycerol 1-phosphate</name>
        <dbReference type="ChEBI" id="CHEBI:57685"/>
    </ligand>
</feature>
<feature type="binding site" evidence="1">
    <location>
        <begin position="203"/>
        <end position="204"/>
    </location>
    <ligand>
        <name>sn-glycerol 1-phosphate</name>
        <dbReference type="ChEBI" id="CHEBI:57685"/>
    </ligand>
</feature>
<feature type="binding site" evidence="1">
    <location>
        <begin position="225"/>
        <end position="226"/>
    </location>
    <ligand>
        <name>sn-glycerol 1-phosphate</name>
        <dbReference type="ChEBI" id="CHEBI:57685"/>
    </ligand>
</feature>
<accession>A1RXV6</accession>
<dbReference type="EC" id="2.5.1.41" evidence="1"/>
<dbReference type="EMBL" id="CP000505">
    <property type="protein sequence ID" value="ABL78036.1"/>
    <property type="molecule type" value="Genomic_DNA"/>
</dbReference>
<dbReference type="RefSeq" id="WP_011752301.1">
    <property type="nucleotide sequence ID" value="NC_008698.1"/>
</dbReference>
<dbReference type="SMR" id="A1RXV6"/>
<dbReference type="STRING" id="368408.Tpen_0633"/>
<dbReference type="EnsemblBacteria" id="ABL78036">
    <property type="protein sequence ID" value="ABL78036"/>
    <property type="gene ID" value="Tpen_0633"/>
</dbReference>
<dbReference type="GeneID" id="4601430"/>
<dbReference type="KEGG" id="tpe:Tpen_0633"/>
<dbReference type="eggNOG" id="arCOG01085">
    <property type="taxonomic scope" value="Archaea"/>
</dbReference>
<dbReference type="HOGENOM" id="CLU_068610_0_0_2"/>
<dbReference type="OrthoDB" id="7409at2157"/>
<dbReference type="UniPathway" id="UPA00940"/>
<dbReference type="Proteomes" id="UP000000641">
    <property type="component" value="Chromosome"/>
</dbReference>
<dbReference type="GO" id="GO:0005737">
    <property type="term" value="C:cytoplasm"/>
    <property type="evidence" value="ECO:0007669"/>
    <property type="project" value="UniProtKB-SubCell"/>
</dbReference>
<dbReference type="GO" id="GO:0000287">
    <property type="term" value="F:magnesium ion binding"/>
    <property type="evidence" value="ECO:0007669"/>
    <property type="project" value="UniProtKB-UniRule"/>
</dbReference>
<dbReference type="GO" id="GO:0047294">
    <property type="term" value="F:phosphoglycerol geranylgeranyltransferase activity"/>
    <property type="evidence" value="ECO:0007669"/>
    <property type="project" value="UniProtKB-UniRule"/>
</dbReference>
<dbReference type="GO" id="GO:0046474">
    <property type="term" value="P:glycerophospholipid biosynthetic process"/>
    <property type="evidence" value="ECO:0007669"/>
    <property type="project" value="UniProtKB-UniRule"/>
</dbReference>
<dbReference type="CDD" id="cd02812">
    <property type="entry name" value="PcrB_like"/>
    <property type="match status" value="1"/>
</dbReference>
<dbReference type="FunFam" id="3.20.20.390:FF:000001">
    <property type="entry name" value="Heptaprenylglyceryl phosphate synthase"/>
    <property type="match status" value="1"/>
</dbReference>
<dbReference type="Gene3D" id="3.20.20.390">
    <property type="entry name" value="FMN-linked oxidoreductases"/>
    <property type="match status" value="1"/>
</dbReference>
<dbReference type="HAMAP" id="MF_00112">
    <property type="entry name" value="GGGP_HepGP_synthase"/>
    <property type="match status" value="1"/>
</dbReference>
<dbReference type="InterPro" id="IPR039074">
    <property type="entry name" value="GGGP/HepGP_synthase_I"/>
</dbReference>
<dbReference type="InterPro" id="IPR038597">
    <property type="entry name" value="GGGP/HepGP_synthase_sf"/>
</dbReference>
<dbReference type="InterPro" id="IPR008205">
    <property type="entry name" value="GGGP_HepGP_synthase"/>
</dbReference>
<dbReference type="InterPro" id="IPR010946">
    <property type="entry name" value="GGGP_synth"/>
</dbReference>
<dbReference type="NCBIfam" id="TIGR01769">
    <property type="entry name" value="GGGP"/>
    <property type="match status" value="1"/>
</dbReference>
<dbReference type="NCBIfam" id="TIGR01768">
    <property type="entry name" value="GGGP-family"/>
    <property type="match status" value="1"/>
</dbReference>
<dbReference type="NCBIfam" id="NF003198">
    <property type="entry name" value="PRK04169.1-2"/>
    <property type="match status" value="1"/>
</dbReference>
<dbReference type="PANTHER" id="PTHR40029">
    <property type="match status" value="1"/>
</dbReference>
<dbReference type="PANTHER" id="PTHR40029:SF2">
    <property type="entry name" value="HEPTAPRENYLGLYCERYL PHOSPHATE SYNTHASE"/>
    <property type="match status" value="1"/>
</dbReference>
<dbReference type="Pfam" id="PF01884">
    <property type="entry name" value="PcrB"/>
    <property type="match status" value="1"/>
</dbReference>
<dbReference type="SUPFAM" id="SSF51395">
    <property type="entry name" value="FMN-linked oxidoreductases"/>
    <property type="match status" value="1"/>
</dbReference>
<name>GGGPS_THEPD</name>
<comment type="function">
    <text evidence="1">Prenyltransferase that catalyzes the transfer of the geranylgeranyl moiety of geranylgeranyl diphosphate (GGPP) to the C3 hydroxyl of sn-glycerol-1-phosphate (G1P). This reaction is the first ether-bond-formation step in the biosynthesis of archaeal membrane lipids.</text>
</comment>
<comment type="catalytic activity">
    <reaction evidence="1">
        <text>sn-glycerol 1-phosphate + (2E,6E,10E)-geranylgeranyl diphosphate = sn-3-O-(geranylgeranyl)glycerol 1-phosphate + diphosphate</text>
        <dbReference type="Rhea" id="RHEA:23404"/>
        <dbReference type="ChEBI" id="CHEBI:33019"/>
        <dbReference type="ChEBI" id="CHEBI:57677"/>
        <dbReference type="ChEBI" id="CHEBI:57685"/>
        <dbReference type="ChEBI" id="CHEBI:58756"/>
        <dbReference type="EC" id="2.5.1.41"/>
    </reaction>
</comment>
<comment type="cofactor">
    <cofactor evidence="1">
        <name>Mg(2+)</name>
        <dbReference type="ChEBI" id="CHEBI:18420"/>
    </cofactor>
</comment>
<comment type="pathway">
    <text evidence="1">Membrane lipid metabolism; glycerophospholipid metabolism.</text>
</comment>
<comment type="subcellular location">
    <subcellularLocation>
        <location evidence="1">Cytoplasm</location>
    </subcellularLocation>
</comment>
<comment type="similarity">
    <text evidence="1">Belongs to the GGGP/HepGP synthase family. Group II subfamily.</text>
</comment>
<reference key="1">
    <citation type="journal article" date="2008" name="J. Bacteriol.">
        <title>Genome sequence of Thermofilum pendens reveals an exceptional loss of biosynthetic pathways without genome reduction.</title>
        <authorList>
            <person name="Anderson I."/>
            <person name="Rodriguez J."/>
            <person name="Susanti D."/>
            <person name="Porat I."/>
            <person name="Reich C."/>
            <person name="Ulrich L.E."/>
            <person name="Elkins J.G."/>
            <person name="Mavromatis K."/>
            <person name="Lykidis A."/>
            <person name="Kim E."/>
            <person name="Thompson L.S."/>
            <person name="Nolan M."/>
            <person name="Land M."/>
            <person name="Copeland A."/>
            <person name="Lapidus A."/>
            <person name="Lucas S."/>
            <person name="Detter C."/>
            <person name="Zhulin I.B."/>
            <person name="Olsen G.J."/>
            <person name="Whitman W."/>
            <person name="Mukhopadhyay B."/>
            <person name="Bristow J."/>
            <person name="Kyrpides N."/>
        </authorList>
    </citation>
    <scope>NUCLEOTIDE SEQUENCE [LARGE SCALE GENOMIC DNA]</scope>
    <source>
        <strain>DSM 2475 / Hrk 5</strain>
    </source>
</reference>
<gene>
    <name type="ordered locus">Tpen_0633</name>
</gene>
<protein>
    <recommendedName>
        <fullName evidence="1">Geranylgeranylglyceryl phosphate synthase</fullName>
        <shortName evidence="1">GGGP synthase</shortName>
        <shortName evidence="1">GGGPS</shortName>
        <ecNumber evidence="1">2.5.1.41</ecNumber>
    </recommendedName>
    <alternativeName>
        <fullName evidence="1">(S)-3-O-geranylgeranylglyceryl phosphate synthase</fullName>
    </alternativeName>
    <alternativeName>
        <fullName evidence="1">Phosphoglycerol geranylgeranyltransferase</fullName>
    </alternativeName>
</protein>
<organism>
    <name type="scientific">Thermofilum pendens (strain DSM 2475 / Hrk 5)</name>
    <dbReference type="NCBI Taxonomy" id="368408"/>
    <lineage>
        <taxon>Archaea</taxon>
        <taxon>Thermoproteota</taxon>
        <taxon>Thermoprotei</taxon>
        <taxon>Thermofilales</taxon>
        <taxon>Thermofilaceae</taxon>
        <taxon>Thermofilum</taxon>
    </lineage>
</organism>
<proteinExistence type="inferred from homology"/>